<keyword id="KW-0687">Ribonucleoprotein</keyword>
<keyword id="KW-0689">Ribosomal protein</keyword>
<accession>C5BGG2</accession>
<feature type="chain" id="PRO_1000205757" description="Small ribosomal subunit protein bS16">
    <location>
        <begin position="1"/>
        <end position="82"/>
    </location>
</feature>
<sequence length="82" mass="9000">MVTIRLARGGAKKRPFYQVVVTDSRNARDGRFIERVGFFNPIATGSAEGLRLDLDRVSHWVSQGATVSDRVAALIKEAQKAA</sequence>
<gene>
    <name evidence="1" type="primary">rpsP</name>
    <name type="ordered locus">NT01EI_3223</name>
</gene>
<dbReference type="EMBL" id="CP001600">
    <property type="protein sequence ID" value="ACR70368.1"/>
    <property type="molecule type" value="Genomic_DNA"/>
</dbReference>
<dbReference type="RefSeq" id="WP_015462230.1">
    <property type="nucleotide sequence ID" value="NZ_CP169062.1"/>
</dbReference>
<dbReference type="SMR" id="C5BGG2"/>
<dbReference type="STRING" id="67780.B6E78_07755"/>
<dbReference type="GeneID" id="72529632"/>
<dbReference type="KEGG" id="eic:NT01EI_3223"/>
<dbReference type="HOGENOM" id="CLU_100590_5_1_6"/>
<dbReference type="OrthoDB" id="9807878at2"/>
<dbReference type="Proteomes" id="UP000001485">
    <property type="component" value="Chromosome"/>
</dbReference>
<dbReference type="GO" id="GO:0005737">
    <property type="term" value="C:cytoplasm"/>
    <property type="evidence" value="ECO:0007669"/>
    <property type="project" value="UniProtKB-ARBA"/>
</dbReference>
<dbReference type="GO" id="GO:0015935">
    <property type="term" value="C:small ribosomal subunit"/>
    <property type="evidence" value="ECO:0007669"/>
    <property type="project" value="TreeGrafter"/>
</dbReference>
<dbReference type="GO" id="GO:0003735">
    <property type="term" value="F:structural constituent of ribosome"/>
    <property type="evidence" value="ECO:0007669"/>
    <property type="project" value="InterPro"/>
</dbReference>
<dbReference type="GO" id="GO:0006412">
    <property type="term" value="P:translation"/>
    <property type="evidence" value="ECO:0007669"/>
    <property type="project" value="UniProtKB-UniRule"/>
</dbReference>
<dbReference type="FunFam" id="3.30.1320.10:FF:000001">
    <property type="entry name" value="30S ribosomal protein S16"/>
    <property type="match status" value="1"/>
</dbReference>
<dbReference type="Gene3D" id="3.30.1320.10">
    <property type="match status" value="1"/>
</dbReference>
<dbReference type="HAMAP" id="MF_00385">
    <property type="entry name" value="Ribosomal_bS16"/>
    <property type="match status" value="1"/>
</dbReference>
<dbReference type="InterPro" id="IPR000307">
    <property type="entry name" value="Ribosomal_bS16"/>
</dbReference>
<dbReference type="InterPro" id="IPR020592">
    <property type="entry name" value="Ribosomal_bS16_CS"/>
</dbReference>
<dbReference type="InterPro" id="IPR023803">
    <property type="entry name" value="Ribosomal_bS16_dom_sf"/>
</dbReference>
<dbReference type="NCBIfam" id="TIGR00002">
    <property type="entry name" value="S16"/>
    <property type="match status" value="1"/>
</dbReference>
<dbReference type="PANTHER" id="PTHR12919">
    <property type="entry name" value="30S RIBOSOMAL PROTEIN S16"/>
    <property type="match status" value="1"/>
</dbReference>
<dbReference type="PANTHER" id="PTHR12919:SF20">
    <property type="entry name" value="SMALL RIBOSOMAL SUBUNIT PROTEIN BS16M"/>
    <property type="match status" value="1"/>
</dbReference>
<dbReference type="Pfam" id="PF00886">
    <property type="entry name" value="Ribosomal_S16"/>
    <property type="match status" value="1"/>
</dbReference>
<dbReference type="SUPFAM" id="SSF54565">
    <property type="entry name" value="Ribosomal protein S16"/>
    <property type="match status" value="1"/>
</dbReference>
<dbReference type="PROSITE" id="PS00732">
    <property type="entry name" value="RIBOSOMAL_S16"/>
    <property type="match status" value="1"/>
</dbReference>
<comment type="similarity">
    <text evidence="1">Belongs to the bacterial ribosomal protein bS16 family.</text>
</comment>
<organism>
    <name type="scientific">Edwardsiella ictaluri (strain 93-146)</name>
    <dbReference type="NCBI Taxonomy" id="634503"/>
    <lineage>
        <taxon>Bacteria</taxon>
        <taxon>Pseudomonadati</taxon>
        <taxon>Pseudomonadota</taxon>
        <taxon>Gammaproteobacteria</taxon>
        <taxon>Enterobacterales</taxon>
        <taxon>Hafniaceae</taxon>
        <taxon>Edwardsiella</taxon>
    </lineage>
</organism>
<proteinExistence type="inferred from homology"/>
<name>RS16_EDWI9</name>
<evidence type="ECO:0000255" key="1">
    <source>
        <dbReference type="HAMAP-Rule" id="MF_00385"/>
    </source>
</evidence>
<evidence type="ECO:0000305" key="2"/>
<protein>
    <recommendedName>
        <fullName evidence="1">Small ribosomal subunit protein bS16</fullName>
    </recommendedName>
    <alternativeName>
        <fullName evidence="2">30S ribosomal protein S16</fullName>
    </alternativeName>
</protein>
<reference key="1">
    <citation type="submission" date="2009-03" db="EMBL/GenBank/DDBJ databases">
        <title>Complete genome sequence of Edwardsiella ictaluri 93-146.</title>
        <authorList>
            <person name="Williams M.L."/>
            <person name="Gillaspy A.F."/>
            <person name="Dyer D.W."/>
            <person name="Thune R.L."/>
            <person name="Waldbieser G.C."/>
            <person name="Schuster S.C."/>
            <person name="Gipson J."/>
            <person name="Zaitshik J."/>
            <person name="Landry C."/>
            <person name="Lawrence M.L."/>
        </authorList>
    </citation>
    <scope>NUCLEOTIDE SEQUENCE [LARGE SCALE GENOMIC DNA]</scope>
    <source>
        <strain>93-146</strain>
    </source>
</reference>